<organism>
    <name type="scientific">Varicella-zoster virus (strain Oka vaccine)</name>
    <name type="common">HHV-3</name>
    <name type="synonym">Human herpesvirus 3</name>
    <dbReference type="NCBI Taxonomy" id="341980"/>
    <lineage>
        <taxon>Viruses</taxon>
        <taxon>Duplodnaviria</taxon>
        <taxon>Heunggongvirae</taxon>
        <taxon>Peploviricota</taxon>
        <taxon>Herviviricetes</taxon>
        <taxon>Herpesvirales</taxon>
        <taxon>Orthoherpesviridae</taxon>
        <taxon>Alphaherpesvirinae</taxon>
        <taxon>Varicellovirus</taxon>
        <taxon>Varicellovirus humanalpha3</taxon>
        <taxon>Human herpesvirus 3</taxon>
    </lineage>
</organism>
<feature type="chain" id="PRO_0000175087" description="Thymidine kinase">
    <location>
        <begin position="1"/>
        <end position="341"/>
    </location>
</feature>
<feature type="active site" description="Proton acceptor" evidence="2">
    <location>
        <position position="48"/>
    </location>
</feature>
<feature type="binding site" evidence="2">
    <location>
        <begin position="19"/>
        <end position="26"/>
    </location>
    <ligand>
        <name>ATP</name>
        <dbReference type="ChEBI" id="CHEBI:30616"/>
    </ligand>
</feature>
<feature type="binding site" evidence="2">
    <location>
        <position position="66"/>
    </location>
    <ligand>
        <name>substrate</name>
    </ligand>
</feature>
<feature type="binding site" evidence="2">
    <location>
        <position position="90"/>
    </location>
    <ligand>
        <name>substrate</name>
    </ligand>
</feature>
<feature type="binding site" evidence="2">
    <location>
        <position position="183"/>
    </location>
    <ligand>
        <name>ATP</name>
        <dbReference type="ChEBI" id="CHEBI:30616"/>
    </ligand>
</feature>
<feature type="binding site" evidence="2">
    <location>
        <position position="189"/>
    </location>
    <ligand>
        <name>substrate</name>
    </ligand>
</feature>
<feature type="strand" evidence="3">
    <location>
        <begin position="10"/>
        <end position="23"/>
    </location>
</feature>
<feature type="helix" evidence="3">
    <location>
        <begin position="27"/>
        <end position="34"/>
    </location>
</feature>
<feature type="turn" evidence="3">
    <location>
        <begin position="35"/>
        <end position="38"/>
    </location>
</feature>
<feature type="helix" evidence="3">
    <location>
        <begin position="40"/>
        <end position="42"/>
    </location>
</feature>
<feature type="strand" evidence="3">
    <location>
        <begin position="43"/>
        <end position="46"/>
    </location>
</feature>
<feature type="helix" evidence="3">
    <location>
        <begin position="50"/>
        <end position="53"/>
    </location>
</feature>
<feature type="helix" evidence="3">
    <location>
        <begin position="61"/>
        <end position="73"/>
    </location>
</feature>
<feature type="helix" evidence="3">
    <location>
        <begin position="79"/>
        <end position="92"/>
    </location>
</feature>
<feature type="helix" evidence="3">
    <location>
        <begin position="94"/>
        <end position="106"/>
    </location>
</feature>
<feature type="strand" evidence="3">
    <location>
        <begin position="124"/>
        <end position="130"/>
    </location>
</feature>
<feature type="helix" evidence="3">
    <location>
        <begin position="133"/>
        <end position="136"/>
    </location>
</feature>
<feature type="helix" evidence="3">
    <location>
        <begin position="138"/>
        <end position="145"/>
    </location>
</feature>
<feature type="helix" evidence="3">
    <location>
        <begin position="151"/>
        <end position="153"/>
    </location>
</feature>
<feature type="helix" evidence="3">
    <location>
        <begin position="154"/>
        <end position="158"/>
    </location>
</feature>
<feature type="strand" evidence="3">
    <location>
        <begin position="169"/>
        <end position="174"/>
    </location>
</feature>
<feature type="helix" evidence="3">
    <location>
        <begin position="177"/>
        <end position="183"/>
    </location>
</feature>
<feature type="helix" evidence="3">
    <location>
        <begin position="196"/>
        <end position="218"/>
    </location>
</feature>
<feature type="helix" evidence="3">
    <location>
        <begin position="224"/>
        <end position="227"/>
    </location>
</feature>
<feature type="helix" evidence="3">
    <location>
        <begin position="233"/>
        <end position="239"/>
    </location>
</feature>
<feature type="helix" evidence="3">
    <location>
        <begin position="253"/>
        <end position="255"/>
    </location>
</feature>
<feature type="helix" evidence="3">
    <location>
        <begin position="258"/>
        <end position="261"/>
    </location>
</feature>
<feature type="helix" evidence="3">
    <location>
        <begin position="264"/>
        <end position="266"/>
    </location>
</feature>
<feature type="helix" evidence="3">
    <location>
        <begin position="275"/>
        <end position="290"/>
    </location>
</feature>
<feature type="strand" evidence="3">
    <location>
        <begin position="292"/>
        <end position="297"/>
    </location>
</feature>
<feature type="helix" evidence="3">
    <location>
        <begin position="302"/>
        <end position="312"/>
    </location>
</feature>
<feature type="helix" evidence="3">
    <location>
        <begin position="313"/>
        <end position="315"/>
    </location>
</feature>
<feature type="strand" evidence="3">
    <location>
        <begin position="319"/>
        <end position="321"/>
    </location>
</feature>
<feature type="helix" evidence="3">
    <location>
        <begin position="323"/>
        <end position="336"/>
    </location>
</feature>
<name>KITH_VZVO</name>
<evidence type="ECO:0000250" key="1"/>
<evidence type="ECO:0000255" key="2">
    <source>
        <dbReference type="HAMAP-Rule" id="MF_04029"/>
    </source>
</evidence>
<evidence type="ECO:0007829" key="3">
    <source>
        <dbReference type="PDB" id="1OSN"/>
    </source>
</evidence>
<comment type="function">
    <text evidence="2">Catalyzes the transfer of the gamma-phospho group of ATP to thymidine to generate dTMP in the salvage pathway of pyrimidine synthesis. The dTMP serves as a substrate for DNA polymerase during viral DNA replication. Allows the virus to be reactivated and to grow in non-proliferative cells lacking a high concentration of phosphorylated nucleic acid precursors.</text>
</comment>
<comment type="catalytic activity">
    <reaction evidence="2">
        <text>thymidine + ATP = dTMP + ADP + H(+)</text>
        <dbReference type="Rhea" id="RHEA:19129"/>
        <dbReference type="ChEBI" id="CHEBI:15378"/>
        <dbReference type="ChEBI" id="CHEBI:17748"/>
        <dbReference type="ChEBI" id="CHEBI:30616"/>
        <dbReference type="ChEBI" id="CHEBI:63528"/>
        <dbReference type="ChEBI" id="CHEBI:456216"/>
        <dbReference type="EC" id="2.7.1.21"/>
    </reaction>
</comment>
<comment type="subunit">
    <text evidence="2">Homodimer.</text>
</comment>
<comment type="miscellaneous">
    <text evidence="1">Phosphorylates and thereby activates certain drugs like acyclovir (ACV), valacyclovir, and famciclovir to a toxic form, that leads to successful suppression of the infection, while the uninfected cell does not have this ability because it lacks TK. Mutations in thymidine kinase may induce HSV resistance to antiviral therapies in immunocompromised patients. The most frequently observed resistant strains are unable to express TK and are avirulent in animal models of disease. Resistance may be acquired less frequently by selecting variants which no longer recognize ACV or ACV triphosphate as substrates but which retain normal functions (By similarity).</text>
</comment>
<comment type="similarity">
    <text evidence="2">Belongs to the herpesviridae thymidine kinase family.</text>
</comment>
<dbReference type="EC" id="2.7.1.21" evidence="2"/>
<dbReference type="EMBL" id="M36160">
    <property type="protein sequence ID" value="AAA45865.1"/>
    <property type="molecule type" value="Genomic_DNA"/>
</dbReference>
<dbReference type="EMBL" id="AB009252">
    <property type="protein sequence ID" value="BAA23727.2"/>
    <property type="molecule type" value="Genomic_DNA"/>
</dbReference>
<dbReference type="EMBL" id="AB009253">
    <property type="protein sequence ID" value="BAA23728.2"/>
    <property type="molecule type" value="Genomic_DNA"/>
</dbReference>
<dbReference type="EMBL" id="AB097932">
    <property type="status" value="NOT_ANNOTATED_CDS"/>
    <property type="molecule type" value="Genomic_DNA"/>
</dbReference>
<dbReference type="EMBL" id="AB097933">
    <property type="status" value="NOT_ANNOTATED_CDS"/>
    <property type="molecule type" value="Genomic_DNA"/>
</dbReference>
<dbReference type="EMBL" id="DQ008354">
    <property type="protein sequence ID" value="AAY57648.1"/>
    <property type="molecule type" value="Genomic_DNA"/>
</dbReference>
<dbReference type="EMBL" id="DQ008355">
    <property type="protein sequence ID" value="AAY57719.1"/>
    <property type="molecule type" value="Genomic_DNA"/>
</dbReference>
<dbReference type="PIR" id="A28930">
    <property type="entry name" value="KIBEEL"/>
</dbReference>
<dbReference type="PDB" id="1OSN">
    <property type="method" value="X-ray"/>
    <property type="resolution" value="3.20 A"/>
    <property type="chains" value="A/B/C/D=1-341"/>
</dbReference>
<dbReference type="PDBsum" id="1OSN"/>
<dbReference type="SMR" id="P0C0E6"/>
<dbReference type="IntAct" id="P0C0E6">
    <property type="interactions" value="3"/>
</dbReference>
<dbReference type="ChEMBL" id="CHEMBL3308966"/>
<dbReference type="DrugBank" id="DB04438">
    <property type="generic name" value="Brivudine monophosphate"/>
</dbReference>
<dbReference type="EvolutionaryTrace" id="P0C0E6"/>
<dbReference type="Proteomes" id="UP000002603">
    <property type="component" value="Genome"/>
</dbReference>
<dbReference type="Proteomes" id="UP000008504">
    <property type="component" value="Genome"/>
</dbReference>
<dbReference type="Proteomes" id="UP000008505">
    <property type="component" value="Genome"/>
</dbReference>
<dbReference type="Proteomes" id="UP000008506">
    <property type="component" value="Genome"/>
</dbReference>
<dbReference type="GO" id="GO:0005524">
    <property type="term" value="F:ATP binding"/>
    <property type="evidence" value="ECO:0007669"/>
    <property type="project" value="UniProtKB-KW"/>
</dbReference>
<dbReference type="GO" id="GO:0004797">
    <property type="term" value="F:thymidine kinase activity"/>
    <property type="evidence" value="ECO:0007669"/>
    <property type="project" value="UniProtKB-EC"/>
</dbReference>
<dbReference type="GO" id="GO:0071897">
    <property type="term" value="P:DNA biosynthetic process"/>
    <property type="evidence" value="ECO:0007669"/>
    <property type="project" value="UniProtKB-KW"/>
</dbReference>
<dbReference type="GO" id="GO:0006230">
    <property type="term" value="P:TMP biosynthetic process"/>
    <property type="evidence" value="ECO:0007669"/>
    <property type="project" value="InterPro"/>
</dbReference>
<dbReference type="Gene3D" id="3.40.50.300">
    <property type="entry name" value="P-loop containing nucleotide triphosphate hydrolases"/>
    <property type="match status" value="1"/>
</dbReference>
<dbReference type="HAMAP" id="MF_04029">
    <property type="entry name" value="HSV_KITH"/>
    <property type="match status" value="1"/>
</dbReference>
<dbReference type="InterPro" id="IPR001889">
    <property type="entry name" value="Herpes_TK"/>
</dbReference>
<dbReference type="InterPro" id="IPR027417">
    <property type="entry name" value="P-loop_NTPase"/>
</dbReference>
<dbReference type="Pfam" id="PF00693">
    <property type="entry name" value="Herpes_TK"/>
    <property type="match status" value="1"/>
</dbReference>
<dbReference type="SUPFAM" id="SSF52540">
    <property type="entry name" value="P-loop containing nucleoside triphosphate hydrolases"/>
    <property type="match status" value="1"/>
</dbReference>
<accession>P0C0E6</accession>
<accession>O57298</accession>
<accession>P14344</accession>
<accession>Q4JQT9</accession>
<protein>
    <recommendedName>
        <fullName evidence="2">Thymidine kinase</fullName>
        <ecNumber evidence="2">2.7.1.21</ecNumber>
    </recommendedName>
</protein>
<sequence length="341" mass="37843">MSTDKTDVKMGVLRIYLDGAYGIGKTTAAEEFLHHFAITPNRILLIGEPLSYWRNLAGEDAICGIYGTQTRRLNGDVSPEDAQRLTAHFQSLFCSPHAIMHAKISALMDTSTSDLVQVNKEPYKIMLSDRHPIASTICFPLSRYLVGDMSPAALPGLLFTLPAEPPGTNLVVCTVSLPSHLSRVSKRARPGETVNLPFVMVLRNVYIMLINTIIFLKTNNWHAGWNTLSFCNDVFKQKLQKSECIKLREVPGIEDTLFAVLKLPELCGEFGNILPLWAWGMETLSNCLRSMSPFVLSLEQTPQHAAQELKTLLPQMTPANMSSGAWNILKELVNAVQDNTS</sequence>
<gene>
    <name evidence="2" type="primary">TK</name>
    <name type="ordered locus">ORF36</name>
</gene>
<keyword id="KW-0002">3D-structure</keyword>
<keyword id="KW-0067">ATP-binding</keyword>
<keyword id="KW-0237">DNA synthesis</keyword>
<keyword id="KW-0244">Early protein</keyword>
<keyword id="KW-0418">Kinase</keyword>
<keyword id="KW-0547">Nucleotide-binding</keyword>
<keyword id="KW-0808">Transferase</keyword>
<reference key="1">
    <citation type="journal article" date="1988" name="J. Gen. Virol.">
        <title>Molecular analysis of the pyrimidine deoxyribonucleoside kinase gene of wild-type and acyclovir-resistant strains of varicella-zoster virus.</title>
        <authorList>
            <person name="Sawyer M.H."/>
            <person name="Inchauspe G."/>
            <person name="Biron K.K."/>
            <person name="Waters D.J."/>
            <person name="Straus S.E."/>
            <person name="Ostrove J.M."/>
        </authorList>
    </citation>
    <scope>NUCLEOTIDE SEQUENCE [GENOMIC DNA]</scope>
</reference>
<reference key="2">
    <citation type="journal article" date="1988" name="Intervirology">
        <title>Molecular analysis of the thymidine kinase gene of thymidine kinase-deficient mutants of varicella-zoster virus.</title>
        <authorList>
            <person name="Mori H."/>
            <person name="Shiraki K."/>
            <person name="Kato T."/>
            <person name="Hayakawa Y."/>
            <person name="Yamanishi K."/>
            <person name="Takahashi M."/>
        </authorList>
    </citation>
    <scope>NUCLEOTIDE SEQUENCE [GENOMIC DNA]</scope>
</reference>
<reference key="3">
    <citation type="journal article" date="1991" name="J. Gen. Virol.">
        <title>Analysis of mutations in the thymidine kinase genes of drug-resistant varicella-zoster virus populations using the polymerase chain reaction.</title>
        <authorList>
            <person name="Lacey S.F."/>
            <person name="Suzutani T."/>
            <person name="Powell K.L."/>
            <person name="Purifoy D.J."/>
            <person name="Honess R.W."/>
        </authorList>
    </citation>
    <scope>NUCLEOTIDE SEQUENCE [GENOMIC DNA]</scope>
    <source>
        <strain>9883</strain>
        <strain>YS</strain>
    </source>
</reference>
<reference key="4">
    <citation type="journal article" date="2002" name="J. Virol.">
        <title>Comparison of the complete DNA sequences of the Oka varicella vaccine and its parental virus.</title>
        <authorList>
            <person name="Gomi Y."/>
            <person name="Sunamachi H."/>
            <person name="Mori Y."/>
            <person name="Nagaike K."/>
            <person name="Takahashi M."/>
            <person name="Yamanishi K."/>
        </authorList>
    </citation>
    <scope>NUCLEOTIDE SEQUENCE [LARGE SCALE GENOMIC DNA]</scope>
    <source>
        <strain>Isolate Human/Japan/P-Oka/1970</strain>
        <strain>Oka varicella vaccine Biken (V-Oka-Biken)</strain>
    </source>
</reference>
<reference key="5">
    <citation type="journal article" date="2008" name="J. Virol.">
        <title>Complete DNA sequences of two oka strain varicella-zoster virus genomes.</title>
        <authorList>
            <person name="Tillieux S.L."/>
            <person name="Halsey W.S."/>
            <person name="Thomas E.S."/>
            <person name="Voycik J.J."/>
            <person name="Sathe G.M."/>
            <person name="Vassilev V."/>
        </authorList>
    </citation>
    <scope>NUCLEOTIDE SEQUENCE [LARGE SCALE GENOMIC DNA]</scope>
    <source>
        <strain>Oka varicella vaccine VarilRix (V-Oka-GSK)</strain>
        <strain>Oka varicella vaccine Varivax (V-Oka-Merck)</strain>
    </source>
</reference>
<reference key="6">
    <citation type="journal article" date="2003" name="J. Biol. Chem.">
        <title>Crystal structure of varicella zoster virus thymidine kinase.</title>
        <authorList>
            <person name="Bird L.E."/>
            <person name="Ren J."/>
            <person name="Wright A."/>
            <person name="Leslie K.D."/>
            <person name="Degreve B."/>
            <person name="Balzarini J."/>
            <person name="Stammers D.K."/>
        </authorList>
    </citation>
    <scope>X-RAY CRYSTALLOGRAPHY (3.2 ANGSTROMS) IN COMPLEX WITH ADP AND BROMOVINYL-DEOXYURIDINE-MONOPHOSPHATE</scope>
</reference>
<proteinExistence type="evidence at protein level"/>
<organismHost>
    <name type="scientific">Homo sapiens</name>
    <name type="common">Human</name>
    <dbReference type="NCBI Taxonomy" id="9606"/>
</organismHost>